<keyword id="KW-0021">Allosteric enzyme</keyword>
<keyword id="KW-0328">Glycosyltransferase</keyword>
<keyword id="KW-0342">GTP-binding</keyword>
<keyword id="KW-0460">Magnesium</keyword>
<keyword id="KW-0547">Nucleotide-binding</keyword>
<keyword id="KW-0808">Transferase</keyword>
<comment type="function">
    <text evidence="1">Catalyzes the conversion of uracil and 5-phospho-alpha-D-ribose 1-diphosphate (PRPP) to UMP and diphosphate.</text>
</comment>
<comment type="catalytic activity">
    <reaction evidence="1">
        <text>UMP + diphosphate = 5-phospho-alpha-D-ribose 1-diphosphate + uracil</text>
        <dbReference type="Rhea" id="RHEA:13017"/>
        <dbReference type="ChEBI" id="CHEBI:17568"/>
        <dbReference type="ChEBI" id="CHEBI:33019"/>
        <dbReference type="ChEBI" id="CHEBI:57865"/>
        <dbReference type="ChEBI" id="CHEBI:58017"/>
        <dbReference type="EC" id="2.4.2.9"/>
    </reaction>
</comment>
<comment type="cofactor">
    <cofactor evidence="1">
        <name>Mg(2+)</name>
        <dbReference type="ChEBI" id="CHEBI:18420"/>
    </cofactor>
    <text evidence="1">Binds 1 Mg(2+) ion per subunit. The magnesium is bound as Mg-PRPP.</text>
</comment>
<comment type="activity regulation">
    <text evidence="1">Allosterically activated by GTP.</text>
</comment>
<comment type="pathway">
    <text evidence="1">Pyrimidine metabolism; UMP biosynthesis via salvage pathway; UMP from uracil: step 1/1.</text>
</comment>
<comment type="similarity">
    <text evidence="1">Belongs to the UPRTase family.</text>
</comment>
<dbReference type="EC" id="2.4.2.9" evidence="1"/>
<dbReference type="EMBL" id="CP000901">
    <property type="protein sequence ID" value="ABX84928.1"/>
    <property type="molecule type" value="Genomic_DNA"/>
</dbReference>
<dbReference type="RefSeq" id="WP_002209776.1">
    <property type="nucleotide sequence ID" value="NZ_CP009935.1"/>
</dbReference>
<dbReference type="SMR" id="A9QZW6"/>
<dbReference type="GeneID" id="96666287"/>
<dbReference type="KEGG" id="ypg:YpAngola_A3121"/>
<dbReference type="PATRIC" id="fig|349746.12.peg.4180"/>
<dbReference type="UniPathway" id="UPA00574">
    <property type="reaction ID" value="UER00636"/>
</dbReference>
<dbReference type="GO" id="GO:0005525">
    <property type="term" value="F:GTP binding"/>
    <property type="evidence" value="ECO:0007669"/>
    <property type="project" value="UniProtKB-KW"/>
</dbReference>
<dbReference type="GO" id="GO:0000287">
    <property type="term" value="F:magnesium ion binding"/>
    <property type="evidence" value="ECO:0007669"/>
    <property type="project" value="UniProtKB-UniRule"/>
</dbReference>
<dbReference type="GO" id="GO:0004845">
    <property type="term" value="F:uracil phosphoribosyltransferase activity"/>
    <property type="evidence" value="ECO:0007669"/>
    <property type="project" value="UniProtKB-UniRule"/>
</dbReference>
<dbReference type="GO" id="GO:0044206">
    <property type="term" value="P:UMP salvage"/>
    <property type="evidence" value="ECO:0007669"/>
    <property type="project" value="UniProtKB-UniRule"/>
</dbReference>
<dbReference type="GO" id="GO:0006223">
    <property type="term" value="P:uracil salvage"/>
    <property type="evidence" value="ECO:0007669"/>
    <property type="project" value="InterPro"/>
</dbReference>
<dbReference type="CDD" id="cd06223">
    <property type="entry name" value="PRTases_typeI"/>
    <property type="match status" value="1"/>
</dbReference>
<dbReference type="FunFam" id="3.40.50.2020:FF:000003">
    <property type="entry name" value="Uracil phosphoribosyltransferase"/>
    <property type="match status" value="1"/>
</dbReference>
<dbReference type="Gene3D" id="3.40.50.2020">
    <property type="match status" value="1"/>
</dbReference>
<dbReference type="HAMAP" id="MF_01218_B">
    <property type="entry name" value="Upp_B"/>
    <property type="match status" value="1"/>
</dbReference>
<dbReference type="InterPro" id="IPR000836">
    <property type="entry name" value="PRibTrfase_dom"/>
</dbReference>
<dbReference type="InterPro" id="IPR029057">
    <property type="entry name" value="PRTase-like"/>
</dbReference>
<dbReference type="InterPro" id="IPR034332">
    <property type="entry name" value="Upp_B"/>
</dbReference>
<dbReference type="InterPro" id="IPR050054">
    <property type="entry name" value="UPRTase/APRTase"/>
</dbReference>
<dbReference type="InterPro" id="IPR005765">
    <property type="entry name" value="Ura_phspho_trans"/>
</dbReference>
<dbReference type="NCBIfam" id="NF001097">
    <property type="entry name" value="PRK00129.1"/>
    <property type="match status" value="1"/>
</dbReference>
<dbReference type="NCBIfam" id="TIGR01091">
    <property type="entry name" value="upp"/>
    <property type="match status" value="1"/>
</dbReference>
<dbReference type="PANTHER" id="PTHR32315">
    <property type="entry name" value="ADENINE PHOSPHORIBOSYLTRANSFERASE"/>
    <property type="match status" value="1"/>
</dbReference>
<dbReference type="PANTHER" id="PTHR32315:SF4">
    <property type="entry name" value="URACIL PHOSPHORIBOSYLTRANSFERASE, CHLOROPLASTIC"/>
    <property type="match status" value="1"/>
</dbReference>
<dbReference type="Pfam" id="PF14681">
    <property type="entry name" value="UPRTase"/>
    <property type="match status" value="1"/>
</dbReference>
<dbReference type="SUPFAM" id="SSF53271">
    <property type="entry name" value="PRTase-like"/>
    <property type="match status" value="1"/>
</dbReference>
<gene>
    <name evidence="1" type="primary">upp</name>
    <name type="ordered locus">YpAngola_A3121</name>
</gene>
<evidence type="ECO:0000255" key="1">
    <source>
        <dbReference type="HAMAP-Rule" id="MF_01218"/>
    </source>
</evidence>
<protein>
    <recommendedName>
        <fullName evidence="1">Uracil phosphoribosyltransferase</fullName>
        <ecNumber evidence="1">2.4.2.9</ecNumber>
    </recommendedName>
    <alternativeName>
        <fullName evidence="1">UMP pyrophosphorylase</fullName>
    </alternativeName>
    <alternativeName>
        <fullName evidence="1">UPRTase</fullName>
    </alternativeName>
</protein>
<feature type="chain" id="PRO_1000139179" description="Uracil phosphoribosyltransferase">
    <location>
        <begin position="1"/>
        <end position="208"/>
    </location>
</feature>
<feature type="binding site" evidence="1">
    <location>
        <position position="78"/>
    </location>
    <ligand>
        <name>5-phospho-alpha-D-ribose 1-diphosphate</name>
        <dbReference type="ChEBI" id="CHEBI:58017"/>
    </ligand>
</feature>
<feature type="binding site" evidence="1">
    <location>
        <position position="103"/>
    </location>
    <ligand>
        <name>5-phospho-alpha-D-ribose 1-diphosphate</name>
        <dbReference type="ChEBI" id="CHEBI:58017"/>
    </ligand>
</feature>
<feature type="binding site" evidence="1">
    <location>
        <begin position="130"/>
        <end position="138"/>
    </location>
    <ligand>
        <name>5-phospho-alpha-D-ribose 1-diphosphate</name>
        <dbReference type="ChEBI" id="CHEBI:58017"/>
    </ligand>
</feature>
<feature type="binding site" evidence="1">
    <location>
        <position position="193"/>
    </location>
    <ligand>
        <name>uracil</name>
        <dbReference type="ChEBI" id="CHEBI:17568"/>
    </ligand>
</feature>
<feature type="binding site" evidence="1">
    <location>
        <begin position="198"/>
        <end position="200"/>
    </location>
    <ligand>
        <name>uracil</name>
        <dbReference type="ChEBI" id="CHEBI:17568"/>
    </ligand>
</feature>
<feature type="binding site" evidence="1">
    <location>
        <position position="199"/>
    </location>
    <ligand>
        <name>5-phospho-alpha-D-ribose 1-diphosphate</name>
        <dbReference type="ChEBI" id="CHEBI:58017"/>
    </ligand>
</feature>
<reference key="1">
    <citation type="journal article" date="2010" name="J. Bacteriol.">
        <title>Genome sequence of the deep-rooted Yersinia pestis strain Angola reveals new insights into the evolution and pangenome of the plague bacterium.</title>
        <authorList>
            <person name="Eppinger M."/>
            <person name="Worsham P.L."/>
            <person name="Nikolich M.P."/>
            <person name="Riley D.R."/>
            <person name="Sebastian Y."/>
            <person name="Mou S."/>
            <person name="Achtman M."/>
            <person name="Lindler L.E."/>
            <person name="Ravel J."/>
        </authorList>
    </citation>
    <scope>NUCLEOTIDE SEQUENCE [LARGE SCALE GENOMIC DNA]</scope>
    <source>
        <strain>Angola</strain>
    </source>
</reference>
<organism>
    <name type="scientific">Yersinia pestis bv. Antiqua (strain Angola)</name>
    <dbReference type="NCBI Taxonomy" id="349746"/>
    <lineage>
        <taxon>Bacteria</taxon>
        <taxon>Pseudomonadati</taxon>
        <taxon>Pseudomonadota</taxon>
        <taxon>Gammaproteobacteria</taxon>
        <taxon>Enterobacterales</taxon>
        <taxon>Yersiniaceae</taxon>
        <taxon>Yersinia</taxon>
    </lineage>
</organism>
<sequence>MKIVEVKHPLVKHKLGLMRENDISTKRFRELASEVGSLLTYVATADLETETVTIEGWNGPVEIEQIKGKKITVVPILRAGLGMMEGVLENVPSARISVVGVYRDEETLKPVPYFQKLVSNINERMALVVDPMLATGGSMIATIDLLKKAGCQSIKVLVLVAAPEGIKALEEAHPDVELYTASIDQGLNEHGYIIPGLGDAGDKIFGTK</sequence>
<name>UPP_YERPG</name>
<proteinExistence type="inferred from homology"/>
<accession>A9QZW6</accession>